<feature type="chain" id="PRO_0000386921" description="Ribosomal RNA small subunit methyltransferase H">
    <location>
        <begin position="1"/>
        <end position="321"/>
    </location>
</feature>
<feature type="binding site" evidence="1">
    <location>
        <begin position="40"/>
        <end position="42"/>
    </location>
    <ligand>
        <name>S-adenosyl-L-methionine</name>
        <dbReference type="ChEBI" id="CHEBI:59789"/>
    </ligand>
</feature>
<feature type="binding site" evidence="1">
    <location>
        <position position="60"/>
    </location>
    <ligand>
        <name>S-adenosyl-L-methionine</name>
        <dbReference type="ChEBI" id="CHEBI:59789"/>
    </ligand>
</feature>
<feature type="binding site" evidence="1">
    <location>
        <position position="84"/>
    </location>
    <ligand>
        <name>S-adenosyl-L-methionine</name>
        <dbReference type="ChEBI" id="CHEBI:59789"/>
    </ligand>
</feature>
<feature type="binding site" evidence="1">
    <location>
        <position position="106"/>
    </location>
    <ligand>
        <name>S-adenosyl-L-methionine</name>
        <dbReference type="ChEBI" id="CHEBI:59789"/>
    </ligand>
</feature>
<feature type="binding site" evidence="1">
    <location>
        <position position="113"/>
    </location>
    <ligand>
        <name>S-adenosyl-L-methionine</name>
        <dbReference type="ChEBI" id="CHEBI:59789"/>
    </ligand>
</feature>
<gene>
    <name evidence="1" type="primary">rsmH</name>
    <name type="synonym">mraW</name>
    <name type="ordered locus">HSM_0620</name>
</gene>
<proteinExistence type="inferred from homology"/>
<name>RSMH_HISS2</name>
<sequence length="321" mass="35842">MSMQDTFSSPEHFTVLLREAVGGLALKENGIYIDGTFGRGGHSRFILSQLSKKGQLIAIDRDPQAIQVAQNIQDPRFRIVHDSFSAIPDICEKLGLTGKIDGILLDLGVSSPQLDNAERGFSFMKDGPLDMRMDTTQGLSATEWLRQVSEQDLAWVLKTFGEERFAKRIAQAIVGYNKSAVQSGAEPLNRTLQLAELIAQSVPFKDKYKHPATRSFQAIRIFINSELDELEKVLNGALNVLAPQGRLSIISFHSLEDRMVKHFIRKQSKGDDLPKGLPLREEQIQHNQKLKPVGKAIMPTEQEMAANVRSRSAVLRIAERI</sequence>
<dbReference type="EC" id="2.1.1.199" evidence="1"/>
<dbReference type="EMBL" id="CP000947">
    <property type="protein sequence ID" value="ACA32275.1"/>
    <property type="molecule type" value="Genomic_DNA"/>
</dbReference>
<dbReference type="RefSeq" id="WP_012341446.1">
    <property type="nucleotide sequence ID" value="NC_010519.1"/>
</dbReference>
<dbReference type="SMR" id="B0US59"/>
<dbReference type="STRING" id="228400.HSM_0620"/>
<dbReference type="GeneID" id="31486901"/>
<dbReference type="KEGG" id="hsm:HSM_0620"/>
<dbReference type="HOGENOM" id="CLU_038422_2_0_6"/>
<dbReference type="GO" id="GO:0005737">
    <property type="term" value="C:cytoplasm"/>
    <property type="evidence" value="ECO:0007669"/>
    <property type="project" value="UniProtKB-SubCell"/>
</dbReference>
<dbReference type="GO" id="GO:0071424">
    <property type="term" value="F:rRNA (cytosine-N4-)-methyltransferase activity"/>
    <property type="evidence" value="ECO:0007669"/>
    <property type="project" value="UniProtKB-UniRule"/>
</dbReference>
<dbReference type="GO" id="GO:0070475">
    <property type="term" value="P:rRNA base methylation"/>
    <property type="evidence" value="ECO:0007669"/>
    <property type="project" value="UniProtKB-UniRule"/>
</dbReference>
<dbReference type="FunFam" id="1.10.150.170:FF:000001">
    <property type="entry name" value="Ribosomal RNA small subunit methyltransferase H"/>
    <property type="match status" value="1"/>
</dbReference>
<dbReference type="Gene3D" id="1.10.150.170">
    <property type="entry name" value="Putative methyltransferase TM0872, insert domain"/>
    <property type="match status" value="1"/>
</dbReference>
<dbReference type="Gene3D" id="3.40.50.150">
    <property type="entry name" value="Vaccinia Virus protein VP39"/>
    <property type="match status" value="1"/>
</dbReference>
<dbReference type="HAMAP" id="MF_01007">
    <property type="entry name" value="16SrRNA_methyltr_H"/>
    <property type="match status" value="1"/>
</dbReference>
<dbReference type="InterPro" id="IPR002903">
    <property type="entry name" value="RsmH"/>
</dbReference>
<dbReference type="InterPro" id="IPR023397">
    <property type="entry name" value="SAM-dep_MeTrfase_MraW_recog"/>
</dbReference>
<dbReference type="InterPro" id="IPR029063">
    <property type="entry name" value="SAM-dependent_MTases_sf"/>
</dbReference>
<dbReference type="NCBIfam" id="TIGR00006">
    <property type="entry name" value="16S rRNA (cytosine(1402)-N(4))-methyltransferase RsmH"/>
    <property type="match status" value="1"/>
</dbReference>
<dbReference type="PANTHER" id="PTHR11265:SF0">
    <property type="entry name" value="12S RRNA N4-METHYLCYTIDINE METHYLTRANSFERASE"/>
    <property type="match status" value="1"/>
</dbReference>
<dbReference type="PANTHER" id="PTHR11265">
    <property type="entry name" value="S-ADENOSYL-METHYLTRANSFERASE MRAW"/>
    <property type="match status" value="1"/>
</dbReference>
<dbReference type="Pfam" id="PF01795">
    <property type="entry name" value="Methyltransf_5"/>
    <property type="match status" value="1"/>
</dbReference>
<dbReference type="PIRSF" id="PIRSF004486">
    <property type="entry name" value="MraW"/>
    <property type="match status" value="1"/>
</dbReference>
<dbReference type="SUPFAM" id="SSF81799">
    <property type="entry name" value="Putative methyltransferase TM0872, insert domain"/>
    <property type="match status" value="1"/>
</dbReference>
<dbReference type="SUPFAM" id="SSF53335">
    <property type="entry name" value="S-adenosyl-L-methionine-dependent methyltransferases"/>
    <property type="match status" value="1"/>
</dbReference>
<keyword id="KW-0963">Cytoplasm</keyword>
<keyword id="KW-0489">Methyltransferase</keyword>
<keyword id="KW-0698">rRNA processing</keyword>
<keyword id="KW-0949">S-adenosyl-L-methionine</keyword>
<keyword id="KW-0808">Transferase</keyword>
<protein>
    <recommendedName>
        <fullName evidence="1">Ribosomal RNA small subunit methyltransferase H</fullName>
        <ecNumber evidence="1">2.1.1.199</ecNumber>
    </recommendedName>
    <alternativeName>
        <fullName evidence="1">16S rRNA m(4)C1402 methyltransferase</fullName>
    </alternativeName>
    <alternativeName>
        <fullName evidence="1">rRNA (cytosine-N(4)-)-methyltransferase RsmH</fullName>
    </alternativeName>
</protein>
<reference key="1">
    <citation type="submission" date="2008-02" db="EMBL/GenBank/DDBJ databases">
        <title>Complete sequence of Haemophilus somnus 2336.</title>
        <authorList>
            <consortium name="US DOE Joint Genome Institute"/>
            <person name="Siddaramappa S."/>
            <person name="Duncan A.J."/>
            <person name="Challacombe J.F."/>
            <person name="Rainey D."/>
            <person name="Gillaspy A.F."/>
            <person name="Carson M."/>
            <person name="Gipson J."/>
            <person name="Gipson M."/>
            <person name="Bruce D."/>
            <person name="Detter J.C."/>
            <person name="Han C.S."/>
            <person name="Land M."/>
            <person name="Tapia R."/>
            <person name="Thompson L.S."/>
            <person name="Orvis J."/>
            <person name="Zaitshik J."/>
            <person name="Barnes G."/>
            <person name="Brettin T.S."/>
            <person name="Dyer D.W."/>
            <person name="Inzana T.J."/>
        </authorList>
    </citation>
    <scope>NUCLEOTIDE SEQUENCE [LARGE SCALE GENOMIC DNA]</scope>
    <source>
        <strain>2336</strain>
    </source>
</reference>
<evidence type="ECO:0000255" key="1">
    <source>
        <dbReference type="HAMAP-Rule" id="MF_01007"/>
    </source>
</evidence>
<accession>B0US59</accession>
<comment type="function">
    <text evidence="1">Specifically methylates the N4 position of cytidine in position 1402 (C1402) of 16S rRNA.</text>
</comment>
<comment type="catalytic activity">
    <reaction evidence="1">
        <text>cytidine(1402) in 16S rRNA + S-adenosyl-L-methionine = N(4)-methylcytidine(1402) in 16S rRNA + S-adenosyl-L-homocysteine + H(+)</text>
        <dbReference type="Rhea" id="RHEA:42928"/>
        <dbReference type="Rhea" id="RHEA-COMP:10286"/>
        <dbReference type="Rhea" id="RHEA-COMP:10287"/>
        <dbReference type="ChEBI" id="CHEBI:15378"/>
        <dbReference type="ChEBI" id="CHEBI:57856"/>
        <dbReference type="ChEBI" id="CHEBI:59789"/>
        <dbReference type="ChEBI" id="CHEBI:74506"/>
        <dbReference type="ChEBI" id="CHEBI:82748"/>
        <dbReference type="EC" id="2.1.1.199"/>
    </reaction>
</comment>
<comment type="subcellular location">
    <subcellularLocation>
        <location evidence="1">Cytoplasm</location>
    </subcellularLocation>
</comment>
<comment type="similarity">
    <text evidence="1">Belongs to the methyltransferase superfamily. RsmH family.</text>
</comment>
<organism>
    <name type="scientific">Histophilus somni (strain 2336)</name>
    <name type="common">Haemophilus somnus</name>
    <dbReference type="NCBI Taxonomy" id="228400"/>
    <lineage>
        <taxon>Bacteria</taxon>
        <taxon>Pseudomonadati</taxon>
        <taxon>Pseudomonadota</taxon>
        <taxon>Gammaproteobacteria</taxon>
        <taxon>Pasteurellales</taxon>
        <taxon>Pasteurellaceae</taxon>
        <taxon>Histophilus</taxon>
    </lineage>
</organism>